<keyword id="KW-0106">Calcium</keyword>
<keyword id="KW-0903">Direct protein sequencing</keyword>
<keyword id="KW-0349">Heme</keyword>
<keyword id="KW-0376">Hydrogen peroxide</keyword>
<keyword id="KW-0408">Iron</keyword>
<keyword id="KW-0479">Metal-binding</keyword>
<keyword id="KW-0560">Oxidoreductase</keyword>
<keyword id="KW-0575">Peroxidase</keyword>
<feature type="chain" id="PRO_0000355596" description="Peroxidase 4">
    <location>
        <begin position="1" status="less than"/>
        <end position="15" status="greater than"/>
    </location>
</feature>
<feature type="unsure residue" description="L or I">
    <location>
        <position position="3"/>
    </location>
</feature>
<feature type="unsure residue" description="F or M">
    <location>
        <position position="4"/>
    </location>
</feature>
<feature type="unsure residue" description="Q or K">
    <location>
        <position position="8"/>
    </location>
</feature>
<feature type="unsure residue" description="L or I">
    <location>
        <position position="10"/>
    </location>
</feature>
<feature type="non-terminal residue">
    <location>
        <position position="1"/>
    </location>
</feature>
<feature type="non-terminal residue">
    <location>
        <position position="15"/>
    </location>
</feature>
<accession>P86057</accession>
<reference evidence="3" key="1">
    <citation type="submission" date="2008-07" db="UniProtKB">
        <authorList>
            <person name="Gomez Ros L.V."/>
            <person name="Belchi-Navarro S."/>
            <person name="Pedreno M.A."/>
        </authorList>
    </citation>
    <scope>PROTEIN SEQUENCE</scope>
</reference>
<comment type="function">
    <text evidence="2">Removal of H(2)O(2), oxidation of toxic reductants, biosynthesis and degradation of lignin, suberization, auxin catabolism, response to environmental stresses such as wounding, pathogen attack and oxidative stress. These functions might be dependent on each isozyme/isoform in each plant tissue.</text>
</comment>
<comment type="catalytic activity">
    <reaction>
        <text>2 a phenolic donor + H2O2 = 2 a phenolic radical donor + 2 H2O</text>
        <dbReference type="Rhea" id="RHEA:56136"/>
        <dbReference type="ChEBI" id="CHEBI:15377"/>
        <dbReference type="ChEBI" id="CHEBI:16240"/>
        <dbReference type="ChEBI" id="CHEBI:139520"/>
        <dbReference type="ChEBI" id="CHEBI:139521"/>
        <dbReference type="EC" id="1.11.1.7"/>
    </reaction>
</comment>
<comment type="cofactor">
    <cofactor evidence="1 2">
        <name>Ca(2+)</name>
        <dbReference type="ChEBI" id="CHEBI:29108"/>
    </cofactor>
    <text evidence="1 2">Binds 2 calcium ions per subunit.</text>
</comment>
<comment type="cofactor">
    <cofactor evidence="1 2">
        <name>heme b</name>
        <dbReference type="ChEBI" id="CHEBI:60344"/>
    </cofactor>
    <text evidence="1 2">Binds 1 heme b (iron(II)-protoporphyrin IX) group per subunit.</text>
</comment>
<comment type="similarity">
    <text evidence="2">Belongs to the peroxidase family. Classical plant (class III) peroxidase subfamily.</text>
</comment>
<dbReference type="EC" id="1.11.1.7"/>
<dbReference type="GO" id="GO:0140825">
    <property type="term" value="F:lactoperoxidase activity"/>
    <property type="evidence" value="ECO:0007669"/>
    <property type="project" value="UniProtKB-EC"/>
</dbReference>
<dbReference type="GO" id="GO:0046872">
    <property type="term" value="F:metal ion binding"/>
    <property type="evidence" value="ECO:0007669"/>
    <property type="project" value="UniProtKB-KW"/>
</dbReference>
<dbReference type="GO" id="GO:0042744">
    <property type="term" value="P:hydrogen peroxide catabolic process"/>
    <property type="evidence" value="ECO:0007669"/>
    <property type="project" value="UniProtKB-KW"/>
</dbReference>
<sequence length="15" mass="1746">ANLFTSDQDLYTDSR</sequence>
<protein>
    <recommendedName>
        <fullName evidence="1">Peroxidase 4</fullName>
        <ecNumber>1.11.1.7</ecNumber>
    </recommendedName>
</protein>
<proteinExistence type="evidence at protein level"/>
<name>PER4_DAUCA</name>
<organism>
    <name type="scientific">Daucus carota</name>
    <name type="common">Wild carrot</name>
    <dbReference type="NCBI Taxonomy" id="4039"/>
    <lineage>
        <taxon>Eukaryota</taxon>
        <taxon>Viridiplantae</taxon>
        <taxon>Streptophyta</taxon>
        <taxon>Embryophyta</taxon>
        <taxon>Tracheophyta</taxon>
        <taxon>Spermatophyta</taxon>
        <taxon>Magnoliopsida</taxon>
        <taxon>eudicotyledons</taxon>
        <taxon>Gunneridae</taxon>
        <taxon>Pentapetalae</taxon>
        <taxon>asterids</taxon>
        <taxon>campanulids</taxon>
        <taxon>Apiales</taxon>
        <taxon>Apiaceae</taxon>
        <taxon>Apioideae</taxon>
        <taxon>Scandiceae</taxon>
        <taxon>Daucinae</taxon>
        <taxon>Daucus</taxon>
        <taxon>Daucus sect. Daucus</taxon>
    </lineage>
</organism>
<evidence type="ECO:0000250" key="1">
    <source>
        <dbReference type="UniProtKB" id="P84714"/>
    </source>
</evidence>
<evidence type="ECO:0000255" key="2">
    <source>
        <dbReference type="PROSITE-ProRule" id="PRU00297"/>
    </source>
</evidence>
<evidence type="ECO:0000305" key="3"/>